<name>MRAZ_MESHJ</name>
<protein>
    <recommendedName>
        <fullName>Transcriptional regulator MraZ</fullName>
    </recommendedName>
</protein>
<organism>
    <name type="scientific">Mesomycoplasma hyopneumoniae (strain J / ATCC 25934 / NCTC 10110)</name>
    <name type="common">Mycoplasma hyopneumoniae</name>
    <dbReference type="NCBI Taxonomy" id="262719"/>
    <lineage>
        <taxon>Bacteria</taxon>
        <taxon>Bacillati</taxon>
        <taxon>Mycoplasmatota</taxon>
        <taxon>Mycoplasmoidales</taxon>
        <taxon>Metamycoplasmataceae</taxon>
        <taxon>Mesomycoplasma</taxon>
    </lineage>
</organism>
<accession>Q4A9T1</accession>
<reference key="1">
    <citation type="journal article" date="2005" name="J. Bacteriol.">
        <title>Swine and poultry pathogens: the complete genome sequences of two strains of Mycoplasma hyopneumoniae and a strain of Mycoplasma synoviae.</title>
        <authorList>
            <person name="Vasconcelos A.T.R."/>
            <person name="Ferreira H.B."/>
            <person name="Bizarro C.V."/>
            <person name="Bonatto S.L."/>
            <person name="Carvalho M.O."/>
            <person name="Pinto P.M."/>
            <person name="Almeida D.F."/>
            <person name="Almeida L.G.P."/>
            <person name="Almeida R."/>
            <person name="Alves-Junior L."/>
            <person name="Assuncao E.N."/>
            <person name="Azevedo V.A.C."/>
            <person name="Bogo M.R."/>
            <person name="Brigido M.M."/>
            <person name="Brocchi M."/>
            <person name="Burity H.A."/>
            <person name="Camargo A.A."/>
            <person name="Camargo S.S."/>
            <person name="Carepo M.S."/>
            <person name="Carraro D.M."/>
            <person name="de Mattos Cascardo J.C."/>
            <person name="Castro L.A."/>
            <person name="Cavalcanti G."/>
            <person name="Chemale G."/>
            <person name="Collevatti R.G."/>
            <person name="Cunha C.W."/>
            <person name="Dallagiovanna B."/>
            <person name="Dambros B.P."/>
            <person name="Dellagostin O.A."/>
            <person name="Falcao C."/>
            <person name="Fantinatti-Garboggini F."/>
            <person name="Felipe M.S.S."/>
            <person name="Fiorentin L."/>
            <person name="Franco G.R."/>
            <person name="Freitas N.S.A."/>
            <person name="Frias D."/>
            <person name="Grangeiro T.B."/>
            <person name="Grisard E.C."/>
            <person name="Guimaraes C.T."/>
            <person name="Hungria M."/>
            <person name="Jardim S.N."/>
            <person name="Krieger M.A."/>
            <person name="Laurino J.P."/>
            <person name="Lima L.F.A."/>
            <person name="Lopes M.I."/>
            <person name="Loreto E.L.S."/>
            <person name="Madeira H.M.F."/>
            <person name="Manfio G.P."/>
            <person name="Maranhao A.Q."/>
            <person name="Martinkovics C.T."/>
            <person name="Medeiros S.R.B."/>
            <person name="Moreira M.A.M."/>
            <person name="Neiva M."/>
            <person name="Ramalho-Neto C.E."/>
            <person name="Nicolas M.F."/>
            <person name="Oliveira S.C."/>
            <person name="Paixao R.F.C."/>
            <person name="Pedrosa F.O."/>
            <person name="Pena S.D.J."/>
            <person name="Pereira M."/>
            <person name="Pereira-Ferrari L."/>
            <person name="Piffer I."/>
            <person name="Pinto L.S."/>
            <person name="Potrich D.P."/>
            <person name="Salim A.C.M."/>
            <person name="Santos F.R."/>
            <person name="Schmitt R."/>
            <person name="Schneider M.P.C."/>
            <person name="Schrank A."/>
            <person name="Schrank I.S."/>
            <person name="Schuck A.F."/>
            <person name="Seuanez H.N."/>
            <person name="Silva D.W."/>
            <person name="Silva R."/>
            <person name="Silva S.C."/>
            <person name="Soares C.M.A."/>
            <person name="Souza K.R.L."/>
            <person name="Souza R.C."/>
            <person name="Staats C.C."/>
            <person name="Steffens M.B.R."/>
            <person name="Teixeira S.M.R."/>
            <person name="Urmenyi T.P."/>
            <person name="Vainstein M.H."/>
            <person name="Zuccherato L.W."/>
            <person name="Simpson A.J.G."/>
            <person name="Zaha A."/>
        </authorList>
    </citation>
    <scope>NUCLEOTIDE SEQUENCE [LARGE SCALE GENOMIC DNA]</scope>
    <source>
        <strain>J / ATCC 25934 / NCTC 10110</strain>
    </source>
</reference>
<sequence length="146" mass="16934">MFGTVFRILDEKNRIVMPPAFRNELEGDFYISANLEKILEIRSQTEFDLLAQKIGKANSLDPKLRDFARYFFGNTVKVSADKQGRFLIPKNLLDLATISKNLYLIGVNNKIEIWPEQRYEQFYAKFSDSEMTADLEKELLKSGVEL</sequence>
<keyword id="KW-0963">Cytoplasm</keyword>
<keyword id="KW-0238">DNA-binding</keyword>
<keyword id="KW-0677">Repeat</keyword>
<keyword id="KW-0804">Transcription</keyword>
<keyword id="KW-0805">Transcription regulation</keyword>
<comment type="subunit">
    <text evidence="1">Forms oligomers.</text>
</comment>
<comment type="subcellular location">
    <subcellularLocation>
        <location evidence="1">Cytoplasm</location>
        <location evidence="1">Nucleoid</location>
    </subcellularLocation>
</comment>
<comment type="similarity">
    <text evidence="1">Belongs to the MraZ family.</text>
</comment>
<feature type="chain" id="PRO_0000230092" description="Transcriptional regulator MraZ">
    <location>
        <begin position="1"/>
        <end position="146"/>
    </location>
</feature>
<feature type="domain" description="SpoVT-AbrB 1" evidence="2">
    <location>
        <begin position="4"/>
        <end position="46"/>
    </location>
</feature>
<feature type="domain" description="SpoVT-AbrB 2" evidence="2">
    <location>
        <begin position="75"/>
        <end position="118"/>
    </location>
</feature>
<dbReference type="EMBL" id="AE017243">
    <property type="protein sequence ID" value="AAZ44490.1"/>
    <property type="molecule type" value="Genomic_DNA"/>
</dbReference>
<dbReference type="RefSeq" id="WP_011206239.1">
    <property type="nucleotide sequence ID" value="NC_007295.1"/>
</dbReference>
<dbReference type="SMR" id="Q4A9T1"/>
<dbReference type="GeneID" id="41334705"/>
<dbReference type="KEGG" id="mhj:MHJ_0404"/>
<dbReference type="eggNOG" id="COG2001">
    <property type="taxonomic scope" value="Bacteria"/>
</dbReference>
<dbReference type="HOGENOM" id="CLU_107907_0_2_14"/>
<dbReference type="OrthoDB" id="9807753at2"/>
<dbReference type="Proteomes" id="UP000000548">
    <property type="component" value="Chromosome"/>
</dbReference>
<dbReference type="GO" id="GO:0005737">
    <property type="term" value="C:cytoplasm"/>
    <property type="evidence" value="ECO:0007669"/>
    <property type="project" value="UniProtKB-UniRule"/>
</dbReference>
<dbReference type="GO" id="GO:0009295">
    <property type="term" value="C:nucleoid"/>
    <property type="evidence" value="ECO:0007669"/>
    <property type="project" value="UniProtKB-SubCell"/>
</dbReference>
<dbReference type="GO" id="GO:0003700">
    <property type="term" value="F:DNA-binding transcription factor activity"/>
    <property type="evidence" value="ECO:0007669"/>
    <property type="project" value="UniProtKB-UniRule"/>
</dbReference>
<dbReference type="GO" id="GO:0000976">
    <property type="term" value="F:transcription cis-regulatory region binding"/>
    <property type="evidence" value="ECO:0007669"/>
    <property type="project" value="TreeGrafter"/>
</dbReference>
<dbReference type="GO" id="GO:2000143">
    <property type="term" value="P:negative regulation of DNA-templated transcription initiation"/>
    <property type="evidence" value="ECO:0007669"/>
    <property type="project" value="TreeGrafter"/>
</dbReference>
<dbReference type="CDD" id="cd16321">
    <property type="entry name" value="MraZ_C"/>
    <property type="match status" value="1"/>
</dbReference>
<dbReference type="CDD" id="cd16320">
    <property type="entry name" value="MraZ_N"/>
    <property type="match status" value="1"/>
</dbReference>
<dbReference type="Gene3D" id="3.40.1550.20">
    <property type="entry name" value="Transcriptional regulator MraZ domain"/>
    <property type="match status" value="1"/>
</dbReference>
<dbReference type="HAMAP" id="MF_01008">
    <property type="entry name" value="MraZ"/>
    <property type="match status" value="1"/>
</dbReference>
<dbReference type="InterPro" id="IPR003444">
    <property type="entry name" value="MraZ"/>
</dbReference>
<dbReference type="InterPro" id="IPR035644">
    <property type="entry name" value="MraZ_C"/>
</dbReference>
<dbReference type="InterPro" id="IPR020603">
    <property type="entry name" value="MraZ_dom"/>
</dbReference>
<dbReference type="InterPro" id="IPR035642">
    <property type="entry name" value="MraZ_N"/>
</dbReference>
<dbReference type="InterPro" id="IPR038619">
    <property type="entry name" value="MraZ_sf"/>
</dbReference>
<dbReference type="InterPro" id="IPR007159">
    <property type="entry name" value="SpoVT-AbrB_dom"/>
</dbReference>
<dbReference type="InterPro" id="IPR037914">
    <property type="entry name" value="SpoVT-AbrB_sf"/>
</dbReference>
<dbReference type="PANTHER" id="PTHR34701">
    <property type="entry name" value="TRANSCRIPTIONAL REGULATOR MRAZ"/>
    <property type="match status" value="1"/>
</dbReference>
<dbReference type="PANTHER" id="PTHR34701:SF1">
    <property type="entry name" value="TRANSCRIPTIONAL REGULATOR MRAZ"/>
    <property type="match status" value="1"/>
</dbReference>
<dbReference type="Pfam" id="PF02381">
    <property type="entry name" value="MraZ"/>
    <property type="match status" value="2"/>
</dbReference>
<dbReference type="SUPFAM" id="SSF89447">
    <property type="entry name" value="AbrB/MazE/MraZ-like"/>
    <property type="match status" value="1"/>
</dbReference>
<dbReference type="PROSITE" id="PS51740">
    <property type="entry name" value="SPOVT_ABRB"/>
    <property type="match status" value="2"/>
</dbReference>
<gene>
    <name evidence="1" type="primary">mraZ</name>
    <name type="ordered locus">MHJ_0404</name>
</gene>
<evidence type="ECO:0000255" key="1">
    <source>
        <dbReference type="HAMAP-Rule" id="MF_01008"/>
    </source>
</evidence>
<evidence type="ECO:0000255" key="2">
    <source>
        <dbReference type="PROSITE-ProRule" id="PRU01076"/>
    </source>
</evidence>
<proteinExistence type="inferred from homology"/>